<evidence type="ECO:0000250" key="1">
    <source>
        <dbReference type="UniProtKB" id="B8GZM2"/>
    </source>
</evidence>
<evidence type="ECO:0000255" key="2"/>
<evidence type="ECO:0000255" key="3">
    <source>
        <dbReference type="PROSITE-ProRule" id="PRU00095"/>
    </source>
</evidence>
<evidence type="ECO:0000269" key="4">
    <source>
    </source>
</evidence>
<evidence type="ECO:0000269" key="5">
    <source>
    </source>
</evidence>
<evidence type="ECO:0000269" key="6">
    <source>
    </source>
</evidence>
<evidence type="ECO:0000269" key="7">
    <source>
    </source>
</evidence>
<evidence type="ECO:0000269" key="8">
    <source>
    </source>
</evidence>
<evidence type="ECO:0000303" key="9">
    <source>
    </source>
</evidence>
<evidence type="ECO:0000305" key="10"/>
<evidence type="ECO:0000305" key="11">
    <source>
    </source>
</evidence>
<dbReference type="EC" id="2.7.7.65" evidence="11"/>
<dbReference type="EMBL" id="U73857">
    <property type="protein sequence ID" value="AAB18109.1"/>
    <property type="molecule type" value="Genomic_DNA"/>
</dbReference>
<dbReference type="EMBL" id="U00096">
    <property type="protein sequence ID" value="AAC73488.1"/>
    <property type="molecule type" value="Genomic_DNA"/>
</dbReference>
<dbReference type="EMBL" id="AP009048">
    <property type="protein sequence ID" value="BAE76166.1"/>
    <property type="molecule type" value="Genomic_DNA"/>
</dbReference>
<dbReference type="EMBL" id="M13345">
    <property type="protein sequence ID" value="AAA83895.1"/>
    <property type="molecule type" value="Genomic_DNA"/>
</dbReference>
<dbReference type="PIR" id="A64767">
    <property type="entry name" value="A64767"/>
</dbReference>
<dbReference type="RefSeq" id="NP_414919.1">
    <property type="nucleotide sequence ID" value="NC_000913.3"/>
</dbReference>
<dbReference type="RefSeq" id="WP_000484048.1">
    <property type="nucleotide sequence ID" value="NZ_STEB01000007.1"/>
</dbReference>
<dbReference type="SMR" id="P0AAP1"/>
<dbReference type="BioGRID" id="4262033">
    <property type="interactions" value="19"/>
</dbReference>
<dbReference type="FunCoup" id="P0AAP1">
    <property type="interactions" value="322"/>
</dbReference>
<dbReference type="STRING" id="511145.b0385"/>
<dbReference type="TCDB" id="9.B.34.1.2">
    <property type="family name" value="the kinase/phosphatase/cyclic-gmp synthase/cyclic di-gmp hydrolase (kpsh) family"/>
</dbReference>
<dbReference type="PaxDb" id="511145-b0385"/>
<dbReference type="EnsemblBacteria" id="AAC73488">
    <property type="protein sequence ID" value="AAC73488"/>
    <property type="gene ID" value="b0385"/>
</dbReference>
<dbReference type="GeneID" id="75170359"/>
<dbReference type="GeneID" id="945037"/>
<dbReference type="KEGG" id="ecj:JW0376"/>
<dbReference type="KEGG" id="eco:b0385"/>
<dbReference type="KEGG" id="ecoc:C3026_01865"/>
<dbReference type="PATRIC" id="fig|1411691.4.peg.1893"/>
<dbReference type="EchoBASE" id="EB1237"/>
<dbReference type="eggNOG" id="COG3706">
    <property type="taxonomic scope" value="Bacteria"/>
</dbReference>
<dbReference type="HOGENOM" id="CLU_000445_11_1_6"/>
<dbReference type="InParanoid" id="P0AAP1"/>
<dbReference type="OMA" id="HGAWKDL"/>
<dbReference type="OrthoDB" id="9812260at2"/>
<dbReference type="PhylomeDB" id="P0AAP1"/>
<dbReference type="BioCyc" id="EcoCyc:EG11257-MONOMER"/>
<dbReference type="BioCyc" id="MetaCyc:EG11257-MONOMER"/>
<dbReference type="UniPathway" id="UPA00599"/>
<dbReference type="PHI-base" id="PHI:8085"/>
<dbReference type="PRO" id="PR:P0AAP1"/>
<dbReference type="Proteomes" id="UP000000625">
    <property type="component" value="Chromosome"/>
</dbReference>
<dbReference type="GO" id="GO:0005886">
    <property type="term" value="C:plasma membrane"/>
    <property type="evidence" value="ECO:0000318"/>
    <property type="project" value="GO_Central"/>
</dbReference>
<dbReference type="GO" id="GO:0052621">
    <property type="term" value="F:diguanylate cyclase activity"/>
    <property type="evidence" value="ECO:0000314"/>
    <property type="project" value="EcoCyc"/>
</dbReference>
<dbReference type="GO" id="GO:0005525">
    <property type="term" value="F:GTP binding"/>
    <property type="evidence" value="ECO:0007669"/>
    <property type="project" value="UniProtKB-KW"/>
</dbReference>
<dbReference type="GO" id="GO:0042802">
    <property type="term" value="F:identical protein binding"/>
    <property type="evidence" value="ECO:0000353"/>
    <property type="project" value="EcoCyc"/>
</dbReference>
<dbReference type="GO" id="GO:0046872">
    <property type="term" value="F:metal ion binding"/>
    <property type="evidence" value="ECO:0007669"/>
    <property type="project" value="UniProtKB-KW"/>
</dbReference>
<dbReference type="GO" id="GO:0043709">
    <property type="term" value="P:cell adhesion involved in single-species biofilm formation"/>
    <property type="evidence" value="ECO:0000318"/>
    <property type="project" value="GO_Central"/>
</dbReference>
<dbReference type="GO" id="GO:1902201">
    <property type="term" value="P:negative regulation of bacterial-type flagellum-dependent cell motility"/>
    <property type="evidence" value="ECO:0000318"/>
    <property type="project" value="GO_Central"/>
</dbReference>
<dbReference type="GO" id="GO:2001008">
    <property type="term" value="P:positive regulation of cellulose biosynthetic process"/>
    <property type="evidence" value="ECO:0000315"/>
    <property type="project" value="EcoCyc"/>
</dbReference>
<dbReference type="CDD" id="cd01949">
    <property type="entry name" value="GGDEF"/>
    <property type="match status" value="1"/>
</dbReference>
<dbReference type="FunFam" id="3.30.70.270:FF:000001">
    <property type="entry name" value="Diguanylate cyclase domain protein"/>
    <property type="match status" value="1"/>
</dbReference>
<dbReference type="Gene3D" id="3.30.70.270">
    <property type="match status" value="1"/>
</dbReference>
<dbReference type="InterPro" id="IPR050469">
    <property type="entry name" value="Diguanylate_Cyclase"/>
</dbReference>
<dbReference type="InterPro" id="IPR000160">
    <property type="entry name" value="GGDEF_dom"/>
</dbReference>
<dbReference type="InterPro" id="IPR007894">
    <property type="entry name" value="MASE2"/>
</dbReference>
<dbReference type="InterPro" id="IPR029787">
    <property type="entry name" value="Nucleotide_cyclase"/>
</dbReference>
<dbReference type="InterPro" id="IPR043128">
    <property type="entry name" value="Rev_trsase/Diguanyl_cyclase"/>
</dbReference>
<dbReference type="NCBIfam" id="TIGR00254">
    <property type="entry name" value="GGDEF"/>
    <property type="match status" value="1"/>
</dbReference>
<dbReference type="NCBIfam" id="NF007599">
    <property type="entry name" value="PRK10245.1"/>
    <property type="match status" value="1"/>
</dbReference>
<dbReference type="PANTHER" id="PTHR45138:SF24">
    <property type="entry name" value="DIGUANYLATE CYCLASE DGCC-RELATED"/>
    <property type="match status" value="1"/>
</dbReference>
<dbReference type="PANTHER" id="PTHR45138">
    <property type="entry name" value="REGULATORY COMPONENTS OF SENSORY TRANSDUCTION SYSTEM"/>
    <property type="match status" value="1"/>
</dbReference>
<dbReference type="Pfam" id="PF00990">
    <property type="entry name" value="GGDEF"/>
    <property type="match status" value="1"/>
</dbReference>
<dbReference type="Pfam" id="PF05230">
    <property type="entry name" value="MASE2"/>
    <property type="match status" value="1"/>
</dbReference>
<dbReference type="SMART" id="SM00267">
    <property type="entry name" value="GGDEF"/>
    <property type="match status" value="1"/>
</dbReference>
<dbReference type="SUPFAM" id="SSF55073">
    <property type="entry name" value="Nucleotide cyclase"/>
    <property type="match status" value="1"/>
</dbReference>
<dbReference type="PROSITE" id="PS50887">
    <property type="entry name" value="GGDEF"/>
    <property type="match status" value="1"/>
</dbReference>
<accession>P0AAP1</accession>
<accession>P21830</accession>
<accession>P77719</accession>
<accession>Q2MC40</accession>
<sequence length="371" mass="41537">MFPKIMNDENFFKKAAAHGEEPPLTPQNEHQRSGLRFARRVRLPRAVGLAGMFLPIASTLVSHPPPGWWWLVLVGWAFVWPHLAWQIASRAVDPLSREIYNLKTDAVLAGMWVGVMGVNVLPSTAMLMIMCLNLMGAGGPRLFVAGLVLMVVSCLVTLELTGITVSFNSAPLEWWLSLPIIVIYPLLFGWVSYQTATKLAEHKRRLQVMSTRDGMTGVYNRRHWETMLRNEFDNCRRHNRDATLLIIDIDHFKSINDTWGHDVGDEAIVALTRQLQITLRGSDVIGRFGGDEFAVIMSGTPAESAITAMLRVHEGLNTLRLPNTPQVTLRISVGVAPLNPQMSHYREWLKSADLALYKAKKAGRNRTEVAA</sequence>
<comment type="function">
    <text evidence="4 8">A probable diguanylate cyclase. The last member of a cascade of expressed proteins, its expression requires DgcM. DgcC production induces biosynthesis of cellulose in some E.coli isolates, but not in K12 strains. Cyclic-di-GMP is a second messenger which controls cell surface-associated traits in bacteria.</text>
</comment>
<comment type="catalytic activity">
    <reaction evidence="11">
        <text>2 GTP = 3',3'-c-di-GMP + 2 diphosphate</text>
        <dbReference type="Rhea" id="RHEA:24898"/>
        <dbReference type="ChEBI" id="CHEBI:33019"/>
        <dbReference type="ChEBI" id="CHEBI:37565"/>
        <dbReference type="ChEBI" id="CHEBI:58805"/>
        <dbReference type="EC" id="2.7.7.65"/>
    </reaction>
</comment>
<comment type="cofactor">
    <cofactor evidence="1">
        <name>Mg(2+)</name>
        <dbReference type="ChEBI" id="CHEBI:18420"/>
    </cofactor>
    <text evidence="10">Binds 1 Mg(2+) ion per monomer.</text>
</comment>
<comment type="pathway">
    <text evidence="10">Purine metabolism; 3',5'-cyclic di-GMP biosynthesis.</text>
</comment>
<comment type="subcellular location">
    <subcellularLocation>
        <location evidence="10">Cell inner membrane</location>
        <topology evidence="2">Multi-pass membrane protein</topology>
    </subcellularLocation>
</comment>
<comment type="induction">
    <text evidence="5 6 7">Expressed at 28 degrees Celsius in late stationary phase, more highly expressed on plates than in liquid medium. Expression is RpoS-, CsgD- and DgcM-dependent.</text>
</comment>
<organism>
    <name type="scientific">Escherichia coli (strain K12)</name>
    <dbReference type="NCBI Taxonomy" id="83333"/>
    <lineage>
        <taxon>Bacteria</taxon>
        <taxon>Pseudomonadati</taxon>
        <taxon>Pseudomonadota</taxon>
        <taxon>Gammaproteobacteria</taxon>
        <taxon>Enterobacterales</taxon>
        <taxon>Enterobacteriaceae</taxon>
        <taxon>Escherichia</taxon>
    </lineage>
</organism>
<gene>
    <name evidence="9" type="primary">dgcC</name>
    <name type="synonym">adrA</name>
    <name type="synonym">yaiC</name>
    <name type="ordered locus">b0385</name>
    <name type="ordered locus">JW0376</name>
</gene>
<reference key="1">
    <citation type="submission" date="1997-01" db="EMBL/GenBank/DDBJ databases">
        <title>Sequence of minutes 4-25 of Escherichia coli.</title>
        <authorList>
            <person name="Chung E."/>
            <person name="Allen E."/>
            <person name="Araujo R."/>
            <person name="Aparicio A.M."/>
            <person name="Davis K."/>
            <person name="Duncan M."/>
            <person name="Federspiel N."/>
            <person name="Hyman R."/>
            <person name="Kalman S."/>
            <person name="Komp C."/>
            <person name="Kurdi O."/>
            <person name="Lew H."/>
            <person name="Lin D."/>
            <person name="Namath A."/>
            <person name="Oefner P."/>
            <person name="Roberts D."/>
            <person name="Schramm S."/>
            <person name="Davis R.W."/>
        </authorList>
    </citation>
    <scope>NUCLEOTIDE SEQUENCE [LARGE SCALE GENOMIC DNA]</scope>
    <source>
        <strain>K12 / MG1655 / ATCC 47076</strain>
    </source>
</reference>
<reference key="2">
    <citation type="journal article" date="1997" name="Science">
        <title>The complete genome sequence of Escherichia coli K-12.</title>
        <authorList>
            <person name="Blattner F.R."/>
            <person name="Plunkett G. III"/>
            <person name="Bloch C.A."/>
            <person name="Perna N.T."/>
            <person name="Burland V."/>
            <person name="Riley M."/>
            <person name="Collado-Vides J."/>
            <person name="Glasner J.D."/>
            <person name="Rode C.K."/>
            <person name="Mayhew G.F."/>
            <person name="Gregor J."/>
            <person name="Davis N.W."/>
            <person name="Kirkpatrick H.A."/>
            <person name="Goeden M.A."/>
            <person name="Rose D.J."/>
            <person name="Mau B."/>
            <person name="Shao Y."/>
        </authorList>
    </citation>
    <scope>NUCLEOTIDE SEQUENCE [LARGE SCALE GENOMIC DNA]</scope>
    <source>
        <strain>K12 / MG1655 / ATCC 47076</strain>
    </source>
</reference>
<reference key="3">
    <citation type="journal article" date="2006" name="Mol. Syst. Biol.">
        <title>Highly accurate genome sequences of Escherichia coli K-12 strains MG1655 and W3110.</title>
        <authorList>
            <person name="Hayashi K."/>
            <person name="Morooka N."/>
            <person name="Yamamoto Y."/>
            <person name="Fujita K."/>
            <person name="Isono K."/>
            <person name="Choi S."/>
            <person name="Ohtsubo E."/>
            <person name="Baba T."/>
            <person name="Wanner B.L."/>
            <person name="Mori H."/>
            <person name="Horiuchi T."/>
        </authorList>
    </citation>
    <scope>NUCLEOTIDE SEQUENCE [LARGE SCALE GENOMIC DNA]</scope>
    <source>
        <strain>K12 / W3110 / ATCC 27325 / DSM 5911</strain>
    </source>
</reference>
<reference key="4">
    <citation type="journal article" date="1986" name="Gene">
        <title>Nucleotide sequence of the alkaline phosphatase gene of Escherichia coli.</title>
        <authorList>
            <person name="Chang C.N."/>
            <person name="Kuang W.-J."/>
            <person name="Chen E.Y."/>
        </authorList>
    </citation>
    <scope>NUCLEOTIDE SEQUENCE [GENOMIC DNA] OF 1-159</scope>
    <source>
        <strain>K12</strain>
    </source>
</reference>
<reference key="5">
    <citation type="journal article" date="2001" name="Mol. Microbiol.">
        <title>The multicellular morphotypes of Salmonella typhimurium and Escherichia coli produce cellulose as the second component of the extracellular matrix.</title>
        <authorList>
            <person name="Zogaj X."/>
            <person name="Nimtz M."/>
            <person name="Rohde M."/>
            <person name="Bokranz W."/>
            <person name="Roemling U."/>
        </authorList>
    </citation>
    <scope>LACK OF CELLULOSE PRODUCTION IN K12 STRAINS</scope>
    <source>
        <strain>K12 / MC4100</strain>
    </source>
</reference>
<reference key="6">
    <citation type="journal article" date="2006" name="J. Bacteriol.">
        <title>Gene expression regulation by the Curli activator CsgD protein: modulation of cellulose biosynthesis and control of negative determinants for microbial adhesion.</title>
        <authorList>
            <person name="Brombacher E."/>
            <person name="Baratto A."/>
            <person name="Dorel C."/>
            <person name="Landini P."/>
        </authorList>
    </citation>
    <scope>REGULATION BY CSGD</scope>
    <source>
        <strain>K12 / MG1655 / ATCC 47076</strain>
    </source>
</reference>
<reference key="7">
    <citation type="journal article" date="2006" name="Mol. Microbiol.">
        <title>Cyclic-di-GMP-mediated signalling within the sigma network of Escherichia coli.</title>
        <authorList>
            <person name="Weber H."/>
            <person name="Pesavento C."/>
            <person name="Possling A."/>
            <person name="Tischendorf G."/>
            <person name="Hengge R."/>
        </authorList>
    </citation>
    <scope>INDUCTION</scope>
    <scope>RPOS-DEPENDENCE</scope>
    <scope>REGULATION CASCADE</scope>
    <source>
        <strain>K12 / MC4100</strain>
    </source>
</reference>
<reference key="8">
    <citation type="journal article" date="2009" name="Microbiology">
        <title>Gene expression patterns and differential input into curli fimbriae regulation of all GGDEF/EAL domain proteins in Escherichia coli.</title>
        <authorList>
            <person name="Sommerfeldt N."/>
            <person name="Possling A."/>
            <person name="Becker G."/>
            <person name="Pesavento C."/>
            <person name="Tschowri N."/>
            <person name="Hengge R."/>
        </authorList>
    </citation>
    <scope>INDUCTION</scope>
    <scope>RPOS-DEPENDENCE</scope>
    <source>
        <strain>K12 / W3110 / ATCC 27325 / DSM 5911</strain>
    </source>
</reference>
<reference key="9">
    <citation type="journal article" date="2010" name="Appl. Microbiol. Biotechnol.">
        <title>Monitoring of diguanylate cyclase activity and of cyclic-di-GMP biosynthesis by whole-cell assays suitable for high-throughput screening of biofilm inhibitors.</title>
        <authorList>
            <person name="Antoniani D."/>
            <person name="Bocci P."/>
            <person name="Maciag A."/>
            <person name="Raffaelli N."/>
            <person name="Landini P."/>
        </authorList>
    </citation>
    <scope>FUNCTION</scope>
    <scope>PROBABLE ENZYME ACTIVITY</scope>
    <scope>MUTAGENESIS OF 291-ASP-GLU-292</scope>
    <source>
        <strain>K12 / MG1655 / ATCC 47076</strain>
    </source>
</reference>
<reference key="10">
    <citation type="journal article" date="2015" name="J. Bacteriol.">
        <title>Systematic nomenclature for GGDEF and EAL domain-containing cyclic di-GMP turnover proteins of Escherichia coli.</title>
        <authorList>
            <person name="Hengge R."/>
            <person name="Galperin M.Y."/>
            <person name="Ghigo J.M."/>
            <person name="Gomelsky M."/>
            <person name="Green J."/>
            <person name="Hughes K.T."/>
            <person name="Jenal U."/>
            <person name="Landini P."/>
        </authorList>
    </citation>
    <scope>NOMENCLATURE</scope>
</reference>
<keyword id="KW-0997">Cell inner membrane</keyword>
<keyword id="KW-1003">Cell membrane</keyword>
<keyword id="KW-0342">GTP-binding</keyword>
<keyword id="KW-0460">Magnesium</keyword>
<keyword id="KW-0472">Membrane</keyword>
<keyword id="KW-0479">Metal-binding</keyword>
<keyword id="KW-0547">Nucleotide-binding</keyword>
<keyword id="KW-1185">Reference proteome</keyword>
<keyword id="KW-0808">Transferase</keyword>
<keyword id="KW-0812">Transmembrane</keyword>
<keyword id="KW-1133">Transmembrane helix</keyword>
<protein>
    <recommendedName>
        <fullName evidence="10">Probable diguanylate cyclase DgcC</fullName>
        <shortName>DGC</shortName>
        <ecNumber evidence="11">2.7.7.65</ecNumber>
    </recommendedName>
</protein>
<feature type="chain" id="PRO_0000168588" description="Probable diguanylate cyclase DgcC">
    <location>
        <begin position="1"/>
        <end position="371"/>
    </location>
</feature>
<feature type="transmembrane region" description="Helical" evidence="2">
    <location>
        <begin position="46"/>
        <end position="66"/>
    </location>
</feature>
<feature type="transmembrane region" description="Helical" evidence="2">
    <location>
        <begin position="68"/>
        <end position="88"/>
    </location>
</feature>
<feature type="transmembrane region" description="Helical" evidence="2">
    <location>
        <begin position="112"/>
        <end position="132"/>
    </location>
</feature>
<feature type="transmembrane region" description="Helical" evidence="2">
    <location>
        <begin position="143"/>
        <end position="163"/>
    </location>
</feature>
<feature type="transmembrane region" description="Helical" evidence="2">
    <location>
        <begin position="171"/>
        <end position="191"/>
    </location>
</feature>
<feature type="domain" description="GGDEF" evidence="3">
    <location>
        <begin position="240"/>
        <end position="371"/>
    </location>
</feature>
<feature type="binding site" evidence="1">
    <location>
        <position position="248"/>
    </location>
    <ligand>
        <name>Mg(2+)</name>
        <dbReference type="ChEBI" id="CHEBI:18420"/>
    </ligand>
</feature>
<feature type="binding site" evidence="1">
    <location>
        <position position="249"/>
    </location>
    <ligand>
        <name>Mg(2+)</name>
        <dbReference type="ChEBI" id="CHEBI:18420"/>
    </ligand>
</feature>
<feature type="binding site" evidence="1">
    <location>
        <position position="256"/>
    </location>
    <ligand>
        <name>substrate</name>
    </ligand>
</feature>
<feature type="binding site" evidence="1">
    <location>
        <position position="265"/>
    </location>
    <ligand>
        <name>substrate</name>
    </ligand>
</feature>
<feature type="binding site" evidence="1">
    <location>
        <position position="291"/>
    </location>
    <ligand>
        <name>Mg(2+)</name>
        <dbReference type="ChEBI" id="CHEBI:18420"/>
    </ligand>
</feature>
<feature type="site" description="Transition state stabilizer" evidence="2">
    <location>
        <position position="253"/>
    </location>
</feature>
<feature type="mutagenesis site" description="No c-di-GMP produced in an overexpressing strain." evidence="8">
    <original>DE</original>
    <variation>AA</variation>
    <location>
        <begin position="291"/>
        <end position="292"/>
    </location>
</feature>
<proteinExistence type="evidence at protein level"/>
<name>DGCC_ECOLI</name>